<feature type="chain" id="PRO_1000064214" description="Glycerol-3-phosphate acyltransferase">
    <location>
        <begin position="1"/>
        <end position="196"/>
    </location>
</feature>
<feature type="transmembrane region" description="Helical" evidence="1">
    <location>
        <begin position="4"/>
        <end position="24"/>
    </location>
</feature>
<feature type="transmembrane region" description="Helical" evidence="1">
    <location>
        <begin position="70"/>
        <end position="90"/>
    </location>
</feature>
<feature type="transmembrane region" description="Helical" evidence="1">
    <location>
        <begin position="111"/>
        <end position="131"/>
    </location>
</feature>
<feature type="transmembrane region" description="Helical" evidence="1">
    <location>
        <begin position="152"/>
        <end position="172"/>
    </location>
</feature>
<accession>Q135I3</accession>
<sequence length="196" mass="20863">MIGIYIAALVLGYLFGSIPFGLILTRIAGTEDLRSIGSGNIGATNVLRTGRKGLAAATLLLDALKGTAAVLIAAGFGGAEAAMLAALGAFLGHLFPVWLKFKGGKGVAVYIGVLLGLFWPAALVFCVLWLATAYTTRYSSLSALVAAFITPIFLWWFGHPTMASLFAVLTLLLFWMHRDNIKRLQSGTESRIGEKK</sequence>
<gene>
    <name evidence="1" type="primary">plsY</name>
    <name type="ordered locus">RPD_3030</name>
</gene>
<dbReference type="EC" id="2.3.1.275" evidence="1"/>
<dbReference type="EMBL" id="CP000283">
    <property type="protein sequence ID" value="ABE40256.1"/>
    <property type="molecule type" value="Genomic_DNA"/>
</dbReference>
<dbReference type="SMR" id="Q135I3"/>
<dbReference type="STRING" id="316057.RPD_3030"/>
<dbReference type="KEGG" id="rpd:RPD_3030"/>
<dbReference type="eggNOG" id="COG0344">
    <property type="taxonomic scope" value="Bacteria"/>
</dbReference>
<dbReference type="HOGENOM" id="CLU_081254_1_0_5"/>
<dbReference type="BioCyc" id="RPAL316057:RPD_RS15215-MONOMER"/>
<dbReference type="UniPathway" id="UPA00085"/>
<dbReference type="Proteomes" id="UP000001818">
    <property type="component" value="Chromosome"/>
</dbReference>
<dbReference type="GO" id="GO:0005886">
    <property type="term" value="C:plasma membrane"/>
    <property type="evidence" value="ECO:0007669"/>
    <property type="project" value="UniProtKB-SubCell"/>
</dbReference>
<dbReference type="GO" id="GO:0043772">
    <property type="term" value="F:acyl-phosphate glycerol-3-phosphate acyltransferase activity"/>
    <property type="evidence" value="ECO:0007669"/>
    <property type="project" value="UniProtKB-UniRule"/>
</dbReference>
<dbReference type="GO" id="GO:0008654">
    <property type="term" value="P:phospholipid biosynthetic process"/>
    <property type="evidence" value="ECO:0007669"/>
    <property type="project" value="UniProtKB-UniRule"/>
</dbReference>
<dbReference type="HAMAP" id="MF_01043">
    <property type="entry name" value="PlsY"/>
    <property type="match status" value="1"/>
</dbReference>
<dbReference type="InterPro" id="IPR003811">
    <property type="entry name" value="G3P_acylTferase_PlsY"/>
</dbReference>
<dbReference type="NCBIfam" id="TIGR00023">
    <property type="entry name" value="glycerol-3-phosphate 1-O-acyltransferase PlsY"/>
    <property type="match status" value="1"/>
</dbReference>
<dbReference type="PANTHER" id="PTHR30309:SF0">
    <property type="entry name" value="GLYCEROL-3-PHOSPHATE ACYLTRANSFERASE-RELATED"/>
    <property type="match status" value="1"/>
</dbReference>
<dbReference type="PANTHER" id="PTHR30309">
    <property type="entry name" value="INNER MEMBRANE PROTEIN YGIH"/>
    <property type="match status" value="1"/>
</dbReference>
<dbReference type="Pfam" id="PF02660">
    <property type="entry name" value="G3P_acyltransf"/>
    <property type="match status" value="1"/>
</dbReference>
<dbReference type="SMART" id="SM01207">
    <property type="entry name" value="G3P_acyltransf"/>
    <property type="match status" value="1"/>
</dbReference>
<comment type="function">
    <text evidence="1">Catalyzes the transfer of an acyl group from acyl-phosphate (acyl-PO(4)) to glycerol-3-phosphate (G3P) to form lysophosphatidic acid (LPA). This enzyme utilizes acyl-phosphate as fatty acyl donor, but not acyl-CoA or acyl-ACP.</text>
</comment>
<comment type="catalytic activity">
    <reaction evidence="1">
        <text>an acyl phosphate + sn-glycerol 3-phosphate = a 1-acyl-sn-glycero-3-phosphate + phosphate</text>
        <dbReference type="Rhea" id="RHEA:34075"/>
        <dbReference type="ChEBI" id="CHEBI:43474"/>
        <dbReference type="ChEBI" id="CHEBI:57597"/>
        <dbReference type="ChEBI" id="CHEBI:57970"/>
        <dbReference type="ChEBI" id="CHEBI:59918"/>
        <dbReference type="EC" id="2.3.1.275"/>
    </reaction>
</comment>
<comment type="pathway">
    <text evidence="1">Lipid metabolism; phospholipid metabolism.</text>
</comment>
<comment type="subunit">
    <text evidence="1">Probably interacts with PlsX.</text>
</comment>
<comment type="subcellular location">
    <subcellularLocation>
        <location evidence="1">Cell inner membrane</location>
        <topology evidence="1">Multi-pass membrane protein</topology>
    </subcellularLocation>
</comment>
<comment type="similarity">
    <text evidence="1">Belongs to the PlsY family.</text>
</comment>
<proteinExistence type="inferred from homology"/>
<keyword id="KW-0997">Cell inner membrane</keyword>
<keyword id="KW-1003">Cell membrane</keyword>
<keyword id="KW-0444">Lipid biosynthesis</keyword>
<keyword id="KW-0443">Lipid metabolism</keyword>
<keyword id="KW-0472">Membrane</keyword>
<keyword id="KW-0594">Phospholipid biosynthesis</keyword>
<keyword id="KW-1208">Phospholipid metabolism</keyword>
<keyword id="KW-0808">Transferase</keyword>
<keyword id="KW-0812">Transmembrane</keyword>
<keyword id="KW-1133">Transmembrane helix</keyword>
<evidence type="ECO:0000255" key="1">
    <source>
        <dbReference type="HAMAP-Rule" id="MF_01043"/>
    </source>
</evidence>
<organism>
    <name type="scientific">Rhodopseudomonas palustris (strain BisB5)</name>
    <dbReference type="NCBI Taxonomy" id="316057"/>
    <lineage>
        <taxon>Bacteria</taxon>
        <taxon>Pseudomonadati</taxon>
        <taxon>Pseudomonadota</taxon>
        <taxon>Alphaproteobacteria</taxon>
        <taxon>Hyphomicrobiales</taxon>
        <taxon>Nitrobacteraceae</taxon>
        <taxon>Rhodopseudomonas</taxon>
    </lineage>
</organism>
<protein>
    <recommendedName>
        <fullName evidence="1">Glycerol-3-phosphate acyltransferase</fullName>
    </recommendedName>
    <alternativeName>
        <fullName evidence="1">Acyl-PO4 G3P acyltransferase</fullName>
    </alternativeName>
    <alternativeName>
        <fullName evidence="1">Acyl-phosphate--glycerol-3-phosphate acyltransferase</fullName>
    </alternativeName>
    <alternativeName>
        <fullName evidence="1">G3P acyltransferase</fullName>
        <shortName evidence="1">GPAT</shortName>
        <ecNumber evidence="1">2.3.1.275</ecNumber>
    </alternativeName>
    <alternativeName>
        <fullName evidence="1">Lysophosphatidic acid synthase</fullName>
        <shortName evidence="1">LPA synthase</shortName>
    </alternativeName>
</protein>
<name>PLSY_RHOPS</name>
<reference key="1">
    <citation type="submission" date="2006-03" db="EMBL/GenBank/DDBJ databases">
        <title>Complete sequence of Rhodopseudomonas palustris BisB5.</title>
        <authorList>
            <consortium name="US DOE Joint Genome Institute"/>
            <person name="Copeland A."/>
            <person name="Lucas S."/>
            <person name="Lapidus A."/>
            <person name="Barry K."/>
            <person name="Detter J.C."/>
            <person name="Glavina del Rio T."/>
            <person name="Hammon N."/>
            <person name="Israni S."/>
            <person name="Dalin E."/>
            <person name="Tice H."/>
            <person name="Pitluck S."/>
            <person name="Chain P."/>
            <person name="Malfatti S."/>
            <person name="Shin M."/>
            <person name="Vergez L."/>
            <person name="Schmutz J."/>
            <person name="Larimer F."/>
            <person name="Land M."/>
            <person name="Hauser L."/>
            <person name="Pelletier D.A."/>
            <person name="Kyrpides N."/>
            <person name="Lykidis A."/>
            <person name="Oda Y."/>
            <person name="Harwood C.S."/>
            <person name="Richardson P."/>
        </authorList>
    </citation>
    <scope>NUCLEOTIDE SEQUENCE [LARGE SCALE GENOMIC DNA]</scope>
    <source>
        <strain>BisB5</strain>
    </source>
</reference>